<organism>
    <name type="scientific">Rhizobium etli (strain ATCC 51251 / DSM 11541 / JCM 21823 / NBRC 15573 / CFN 42)</name>
    <dbReference type="NCBI Taxonomy" id="347834"/>
    <lineage>
        <taxon>Bacteria</taxon>
        <taxon>Pseudomonadati</taxon>
        <taxon>Pseudomonadota</taxon>
        <taxon>Alphaproteobacteria</taxon>
        <taxon>Hyphomicrobiales</taxon>
        <taxon>Rhizobiaceae</taxon>
        <taxon>Rhizobium/Agrobacterium group</taxon>
        <taxon>Rhizobium</taxon>
    </lineage>
</organism>
<evidence type="ECO:0000255" key="1">
    <source>
        <dbReference type="HAMAP-Rule" id="MF_00012"/>
    </source>
</evidence>
<name>ILVD_RHIEC</name>
<dbReference type="EC" id="4.2.1.9" evidence="1"/>
<dbReference type="EMBL" id="CP000133">
    <property type="protein sequence ID" value="ABC90499.1"/>
    <property type="molecule type" value="Genomic_DNA"/>
</dbReference>
<dbReference type="RefSeq" id="WP_011424997.1">
    <property type="nucleotide sequence ID" value="NC_007761.1"/>
</dbReference>
<dbReference type="SMR" id="Q2K9I7"/>
<dbReference type="KEGG" id="ret:RHE_CH01704"/>
<dbReference type="eggNOG" id="COG0129">
    <property type="taxonomic scope" value="Bacteria"/>
</dbReference>
<dbReference type="HOGENOM" id="CLU_014271_4_2_5"/>
<dbReference type="OrthoDB" id="9807077at2"/>
<dbReference type="UniPathway" id="UPA00047">
    <property type="reaction ID" value="UER00057"/>
</dbReference>
<dbReference type="UniPathway" id="UPA00049">
    <property type="reaction ID" value="UER00061"/>
</dbReference>
<dbReference type="Proteomes" id="UP000001936">
    <property type="component" value="Chromosome"/>
</dbReference>
<dbReference type="GO" id="GO:0005829">
    <property type="term" value="C:cytosol"/>
    <property type="evidence" value="ECO:0007669"/>
    <property type="project" value="TreeGrafter"/>
</dbReference>
<dbReference type="GO" id="GO:0051537">
    <property type="term" value="F:2 iron, 2 sulfur cluster binding"/>
    <property type="evidence" value="ECO:0007669"/>
    <property type="project" value="UniProtKB-UniRule"/>
</dbReference>
<dbReference type="GO" id="GO:0004160">
    <property type="term" value="F:dihydroxy-acid dehydratase activity"/>
    <property type="evidence" value="ECO:0007669"/>
    <property type="project" value="UniProtKB-UniRule"/>
</dbReference>
<dbReference type="GO" id="GO:0000287">
    <property type="term" value="F:magnesium ion binding"/>
    <property type="evidence" value="ECO:0007669"/>
    <property type="project" value="UniProtKB-UniRule"/>
</dbReference>
<dbReference type="GO" id="GO:0009097">
    <property type="term" value="P:isoleucine biosynthetic process"/>
    <property type="evidence" value="ECO:0007669"/>
    <property type="project" value="UniProtKB-UniRule"/>
</dbReference>
<dbReference type="GO" id="GO:0009099">
    <property type="term" value="P:L-valine biosynthetic process"/>
    <property type="evidence" value="ECO:0007669"/>
    <property type="project" value="UniProtKB-UniRule"/>
</dbReference>
<dbReference type="FunFam" id="3.50.30.80:FF:000001">
    <property type="entry name" value="Dihydroxy-acid dehydratase"/>
    <property type="match status" value="1"/>
</dbReference>
<dbReference type="Gene3D" id="3.50.30.80">
    <property type="entry name" value="IlvD/EDD C-terminal domain-like"/>
    <property type="match status" value="1"/>
</dbReference>
<dbReference type="HAMAP" id="MF_00012">
    <property type="entry name" value="IlvD"/>
    <property type="match status" value="1"/>
</dbReference>
<dbReference type="InterPro" id="IPR042096">
    <property type="entry name" value="Dihydro-acid_dehy_C"/>
</dbReference>
<dbReference type="InterPro" id="IPR004404">
    <property type="entry name" value="DihydroxyA_deHydtase"/>
</dbReference>
<dbReference type="InterPro" id="IPR020558">
    <property type="entry name" value="DiOHA_6PGluconate_deHydtase_CS"/>
</dbReference>
<dbReference type="InterPro" id="IPR056740">
    <property type="entry name" value="ILV_EDD_C"/>
</dbReference>
<dbReference type="InterPro" id="IPR000581">
    <property type="entry name" value="ILV_EDD_N"/>
</dbReference>
<dbReference type="InterPro" id="IPR037237">
    <property type="entry name" value="IlvD/EDD_N"/>
</dbReference>
<dbReference type="NCBIfam" id="TIGR00110">
    <property type="entry name" value="ilvD"/>
    <property type="match status" value="1"/>
</dbReference>
<dbReference type="NCBIfam" id="NF009103">
    <property type="entry name" value="PRK12448.1"/>
    <property type="match status" value="1"/>
</dbReference>
<dbReference type="PANTHER" id="PTHR43661">
    <property type="entry name" value="D-XYLONATE DEHYDRATASE"/>
    <property type="match status" value="1"/>
</dbReference>
<dbReference type="PANTHER" id="PTHR43661:SF3">
    <property type="entry name" value="D-XYLONATE DEHYDRATASE YAGF-RELATED"/>
    <property type="match status" value="1"/>
</dbReference>
<dbReference type="Pfam" id="PF24877">
    <property type="entry name" value="ILV_EDD_C"/>
    <property type="match status" value="1"/>
</dbReference>
<dbReference type="Pfam" id="PF00920">
    <property type="entry name" value="ILVD_EDD_N"/>
    <property type="match status" value="1"/>
</dbReference>
<dbReference type="SUPFAM" id="SSF143975">
    <property type="entry name" value="IlvD/EDD N-terminal domain-like"/>
    <property type="match status" value="1"/>
</dbReference>
<dbReference type="SUPFAM" id="SSF52016">
    <property type="entry name" value="LeuD/IlvD-like"/>
    <property type="match status" value="1"/>
</dbReference>
<dbReference type="PROSITE" id="PS00886">
    <property type="entry name" value="ILVD_EDD_1"/>
    <property type="match status" value="1"/>
</dbReference>
<dbReference type="PROSITE" id="PS00887">
    <property type="entry name" value="ILVD_EDD_2"/>
    <property type="match status" value="1"/>
</dbReference>
<comment type="function">
    <text evidence="1">Functions in the biosynthesis of branched-chain amino acids. Catalyzes the dehydration of (2R,3R)-2,3-dihydroxy-3-methylpentanoate (2,3-dihydroxy-3-methylvalerate) into 2-oxo-3-methylpentanoate (2-oxo-3-methylvalerate) and of (2R)-2,3-dihydroxy-3-methylbutanoate (2,3-dihydroxyisovalerate) into 2-oxo-3-methylbutanoate (2-oxoisovalerate), the penultimate precursor to L-isoleucine and L-valine, respectively.</text>
</comment>
<comment type="catalytic activity">
    <reaction evidence="1">
        <text>(2R)-2,3-dihydroxy-3-methylbutanoate = 3-methyl-2-oxobutanoate + H2O</text>
        <dbReference type="Rhea" id="RHEA:24809"/>
        <dbReference type="ChEBI" id="CHEBI:11851"/>
        <dbReference type="ChEBI" id="CHEBI:15377"/>
        <dbReference type="ChEBI" id="CHEBI:49072"/>
        <dbReference type="EC" id="4.2.1.9"/>
    </reaction>
    <physiologicalReaction direction="left-to-right" evidence="1">
        <dbReference type="Rhea" id="RHEA:24810"/>
    </physiologicalReaction>
</comment>
<comment type="catalytic activity">
    <reaction evidence="1">
        <text>(2R,3R)-2,3-dihydroxy-3-methylpentanoate = (S)-3-methyl-2-oxopentanoate + H2O</text>
        <dbReference type="Rhea" id="RHEA:27694"/>
        <dbReference type="ChEBI" id="CHEBI:15377"/>
        <dbReference type="ChEBI" id="CHEBI:35146"/>
        <dbReference type="ChEBI" id="CHEBI:49258"/>
        <dbReference type="EC" id="4.2.1.9"/>
    </reaction>
    <physiologicalReaction direction="left-to-right" evidence="1">
        <dbReference type="Rhea" id="RHEA:27695"/>
    </physiologicalReaction>
</comment>
<comment type="cofactor">
    <cofactor evidence="1">
        <name>[2Fe-2S] cluster</name>
        <dbReference type="ChEBI" id="CHEBI:190135"/>
    </cofactor>
    <text evidence="1">Binds 1 [2Fe-2S] cluster per subunit. This cluster acts as a Lewis acid cofactor.</text>
</comment>
<comment type="cofactor">
    <cofactor evidence="1">
        <name>Mg(2+)</name>
        <dbReference type="ChEBI" id="CHEBI:18420"/>
    </cofactor>
</comment>
<comment type="pathway">
    <text evidence="1">Amino-acid biosynthesis; L-isoleucine biosynthesis; L-isoleucine from 2-oxobutanoate: step 3/4.</text>
</comment>
<comment type="pathway">
    <text evidence="1">Amino-acid biosynthesis; L-valine biosynthesis; L-valine from pyruvate: step 3/4.</text>
</comment>
<comment type="subunit">
    <text evidence="1">Homodimer.</text>
</comment>
<comment type="similarity">
    <text evidence="1">Belongs to the IlvD/Edd family.</text>
</comment>
<feature type="chain" id="PRO_1000001043" description="Dihydroxy-acid dehydratase">
    <location>
        <begin position="1"/>
        <end position="612"/>
    </location>
</feature>
<feature type="active site" description="Proton acceptor" evidence="1">
    <location>
        <position position="517"/>
    </location>
</feature>
<feature type="binding site" evidence="1">
    <location>
        <position position="81"/>
    </location>
    <ligand>
        <name>Mg(2+)</name>
        <dbReference type="ChEBI" id="CHEBI:18420"/>
    </ligand>
</feature>
<feature type="binding site" evidence="1">
    <location>
        <position position="122"/>
    </location>
    <ligand>
        <name>[2Fe-2S] cluster</name>
        <dbReference type="ChEBI" id="CHEBI:190135"/>
    </ligand>
</feature>
<feature type="binding site" evidence="1">
    <location>
        <position position="123"/>
    </location>
    <ligand>
        <name>Mg(2+)</name>
        <dbReference type="ChEBI" id="CHEBI:18420"/>
    </ligand>
</feature>
<feature type="binding site" description="via carbamate group" evidence="1">
    <location>
        <position position="124"/>
    </location>
    <ligand>
        <name>Mg(2+)</name>
        <dbReference type="ChEBI" id="CHEBI:18420"/>
    </ligand>
</feature>
<feature type="binding site" evidence="1">
    <location>
        <position position="195"/>
    </location>
    <ligand>
        <name>[2Fe-2S] cluster</name>
        <dbReference type="ChEBI" id="CHEBI:190135"/>
    </ligand>
</feature>
<feature type="binding site" evidence="1">
    <location>
        <position position="491"/>
    </location>
    <ligand>
        <name>Mg(2+)</name>
        <dbReference type="ChEBI" id="CHEBI:18420"/>
    </ligand>
</feature>
<feature type="modified residue" description="N6-carboxylysine" evidence="1">
    <location>
        <position position="124"/>
    </location>
</feature>
<proteinExistence type="inferred from homology"/>
<sequence>MPAYRSRTTTHGRNMAGARGLWRATGMKDSDFGKPIIAVVNSFTQFVPGHVHLKDLGQLVAREIEAAGGVAKEFNTIAVDDGIAMGHDGMLYSLPSRELIADSVEYMVNAHCADAMVCISNCDKITPGMLMASLRLNIPTVFVSGGPMEAGKVVLHGKQHALDLVDAMVAAADDKISDEDVKVIERSACPTCGSCSGMFTANSMNCLTEALGLSLPGNGSTLATHADRKRLFVEAGHLIVDLARRYYEQDDVKALPRTIASKQAFENAMALDIAMGGSTNTVLHILAAAHEGEVDFTMADIDALSRRVPCLSKVAPAKSDVHMEDVHRAGGIMSILGELDKGGLLNRDCPTVHAETLGDAIDRWDITRTTSDTVRDFYRAAPGGIPTQVAFSQEARWDELDTDRQNGVIRSVEHPFSKDGGLAVLKGNLAVDGCIVKTAGVDESILKFSGPARVFESQDASVKAILANEIKAGDVVVIRYEGPKGGPGMQEMLYPTSYLKSKGLGKACALITDGRFSGGTSGLSIGHVSPEAANGGTIGLVREGDIIDIDIPNRTISLRVGEAELAARRAEQDARGWRPTEVRKRNVTTALKAYAAFATSADRGAVRDLDAR</sequence>
<reference key="1">
    <citation type="journal article" date="2006" name="Proc. Natl. Acad. Sci. U.S.A.">
        <title>The partitioned Rhizobium etli genome: genetic and metabolic redundancy in seven interacting replicons.</title>
        <authorList>
            <person name="Gonzalez V."/>
            <person name="Santamaria R.I."/>
            <person name="Bustos P."/>
            <person name="Hernandez-Gonzalez I."/>
            <person name="Medrano-Soto A."/>
            <person name="Moreno-Hagelsieb G."/>
            <person name="Janga S.C."/>
            <person name="Ramirez M.A."/>
            <person name="Jimenez-Jacinto V."/>
            <person name="Collado-Vides J."/>
            <person name="Davila G."/>
        </authorList>
    </citation>
    <scope>NUCLEOTIDE SEQUENCE [LARGE SCALE GENOMIC DNA]</scope>
    <source>
        <strain>ATCC 51251 / DSM 11541 / JCM 21823 / NBRC 15573 / CFN 42</strain>
    </source>
</reference>
<gene>
    <name evidence="1" type="primary">ilvD</name>
    <name type="ordered locus">RHE_CH01704</name>
</gene>
<keyword id="KW-0001">2Fe-2S</keyword>
<keyword id="KW-0028">Amino-acid biosynthesis</keyword>
<keyword id="KW-0100">Branched-chain amino acid biosynthesis</keyword>
<keyword id="KW-0408">Iron</keyword>
<keyword id="KW-0411">Iron-sulfur</keyword>
<keyword id="KW-0456">Lyase</keyword>
<keyword id="KW-0460">Magnesium</keyword>
<keyword id="KW-0479">Metal-binding</keyword>
<keyword id="KW-1185">Reference proteome</keyword>
<protein>
    <recommendedName>
        <fullName evidence="1">Dihydroxy-acid dehydratase</fullName>
        <shortName evidence="1">DAD</shortName>
        <ecNumber evidence="1">4.2.1.9</ecNumber>
    </recommendedName>
</protein>
<accession>Q2K9I7</accession>